<name>GB_SHV21</name>
<comment type="function">
    <text evidence="2">Envelope glycoprotein that forms spikes at the surface of virion envelope. Essential for the initial attachment to heparan sulfate moieties of the host cell surface proteoglycans. Involved in fusion of viral and cellular membranes leading to virus entry into the host cell. Following initial binding to its host receptors, membrane fusion is mediated by the fusion machinery composed at least of gB and the heterodimer gH/gL. May be involved in the fusion between the virion envelope and the outer nuclear membrane during virion egress.</text>
</comment>
<comment type="subunit">
    <text evidence="2">Homotrimer; disulfide-linked. Binds to heparan sulfate proteoglycans. Interacts with gH/gL heterodimer.</text>
</comment>
<comment type="subcellular location">
    <subcellularLocation>
        <location evidence="2">Virion membrane</location>
        <topology evidence="2">Single-pass type I membrane protein</topology>
    </subcellularLocation>
    <subcellularLocation>
        <location evidence="2">Host cell membrane</location>
        <topology evidence="2">Single-pass type I membrane protein</topology>
    </subcellularLocation>
    <subcellularLocation>
        <location evidence="2">Host endosome membrane</location>
        <topology evidence="2">Single-pass type I membrane protein</topology>
    </subcellularLocation>
    <subcellularLocation>
        <location evidence="2">Host Golgi apparatus membrane</location>
        <topology evidence="2">Single-pass type I membrane protein</topology>
    </subcellularLocation>
    <text evidence="2">During virion morphogenesis, this protein probably accumulates in the endosomes and trans-Golgi where secondary envelopment occurs. It is probably transported to the cell surface from where it is endocytosed and directed to the trans-Golgi network (TGN).</text>
</comment>
<comment type="PTM">
    <text evidence="3">A proteolytic cleavage by host furin generates two subunits that remain linked by disulfide bonds.</text>
</comment>
<comment type="similarity">
    <text evidence="2">Belongs to the herpesviridae glycoprotein B family.</text>
</comment>
<sequence length="808" mass="91695">MVPNKHLLLIILSFSTACGQTTPTTAVEKNKTQAIYQEYFKYRVCSASTTGELFRFDLDRTCPSTEDKVHKEGILLVYKKNIVPYIFKVRRYKKITTSVRIFNGWTREGVAITNKWELSRAVPKYEIDIMDKTYQCHNCMQIEVNGMLNSYYDRDGNNKTVDLKPVDGLTGAITRYISQPKVFADPGWLWGTYRTRTTVNCEIVDMFARSADPYTYFVTALGDTVEVSPFCDVDNSCPNATDVLSVQIDLNHTVVDYGNRATSQQHKKRIFAHTLDYSVSWEAVNKSASVCSMVFWKSFQRAIQTEHDLTYHFIANEITAGFSTVKEPLANFTSDYNCLMTHINTTLEDKIARVNNTHTPNGTAEYYQTEGGMILVWQPLIAIELEEAMLEATTSPVTPSAPTSSSRSKRAIRSIRDVSAGSENNVFLSQIQYAYDKLRQSINNVLEELAITWCREQVRQTMVWYEIAKINPTSVMTAIYGKPVSRKALGDVISVTECINVDQSSVSIHKSLKTENNDICYSRPPVTFKFVNSSQLFKGQLGARNEILLSESLVENCHQNAETFFTAKNETYHFKNYVHVETLPVNNISTLDTFLALNLTFIENIDFKAVELYSSGERKLANVFDLETMFREYNYYAQSISGLRKDFDNSQRNNRDRIIQDFSEILADLGSIGKVIVNVASGAFSLFGGIVTGILNFIKNPLGGMFTFLLIGAVIILVILLVRRTNNMSQAPIRMIYPDVEKSKSTVTPMEPETIKQILLGMHNMQQEAYKKKEEQRAARPSIFRQAAETFLRKRSGYKQISTEDKIV</sequence>
<dbReference type="EMBL" id="X64346">
    <property type="protein sequence ID" value="CAA45631.1"/>
    <property type="molecule type" value="Genomic_DNA"/>
</dbReference>
<dbReference type="EMBL" id="M31122">
    <property type="protein sequence ID" value="AAA46164.1"/>
    <property type="molecule type" value="Genomic_DNA"/>
</dbReference>
<dbReference type="RefSeq" id="NP_040210.1">
    <property type="nucleotide sequence ID" value="NC_001350.1"/>
</dbReference>
<dbReference type="SMR" id="P24905"/>
<dbReference type="GlyCosmos" id="P24905">
    <property type="glycosylation" value="13 sites, No reported glycans"/>
</dbReference>
<dbReference type="KEGG" id="vg:1682521"/>
<dbReference type="Proteomes" id="UP000000587">
    <property type="component" value="Segment"/>
</dbReference>
<dbReference type="GO" id="GO:0044175">
    <property type="term" value="C:host cell endosome membrane"/>
    <property type="evidence" value="ECO:0007669"/>
    <property type="project" value="UniProtKB-SubCell"/>
</dbReference>
<dbReference type="GO" id="GO:0044178">
    <property type="term" value="C:host cell Golgi membrane"/>
    <property type="evidence" value="ECO:0007669"/>
    <property type="project" value="UniProtKB-SubCell"/>
</dbReference>
<dbReference type="GO" id="GO:0020002">
    <property type="term" value="C:host cell plasma membrane"/>
    <property type="evidence" value="ECO:0007669"/>
    <property type="project" value="UniProtKB-SubCell"/>
</dbReference>
<dbReference type="GO" id="GO:0016020">
    <property type="term" value="C:membrane"/>
    <property type="evidence" value="ECO:0007669"/>
    <property type="project" value="UniProtKB-KW"/>
</dbReference>
<dbReference type="GO" id="GO:0019031">
    <property type="term" value="C:viral envelope"/>
    <property type="evidence" value="ECO:0007669"/>
    <property type="project" value="UniProtKB-KW"/>
</dbReference>
<dbReference type="GO" id="GO:0055036">
    <property type="term" value="C:virion membrane"/>
    <property type="evidence" value="ECO:0007669"/>
    <property type="project" value="UniProtKB-SubCell"/>
</dbReference>
<dbReference type="GO" id="GO:0046718">
    <property type="term" value="P:symbiont entry into host cell"/>
    <property type="evidence" value="ECO:0007669"/>
    <property type="project" value="UniProtKB-KW"/>
</dbReference>
<dbReference type="GO" id="GO:0019062">
    <property type="term" value="P:virion attachment to host cell"/>
    <property type="evidence" value="ECO:0007669"/>
    <property type="project" value="UniProtKB-KW"/>
</dbReference>
<dbReference type="Gene3D" id="1.20.5.1890">
    <property type="match status" value="1"/>
</dbReference>
<dbReference type="Gene3D" id="2.30.29.100">
    <property type="match status" value="2"/>
</dbReference>
<dbReference type="Gene3D" id="2.30.30.1230">
    <property type="match status" value="1"/>
</dbReference>
<dbReference type="Gene3D" id="6.10.250.3280">
    <property type="match status" value="1"/>
</dbReference>
<dbReference type="HAMAP" id="MF_04032">
    <property type="entry name" value="HSV_GB"/>
    <property type="match status" value="1"/>
</dbReference>
<dbReference type="InterPro" id="IPR035377">
    <property type="entry name" value="Glycoprot_B_PH1"/>
</dbReference>
<dbReference type="InterPro" id="IPR035381">
    <property type="entry name" value="Glycoprot_B_PH2"/>
</dbReference>
<dbReference type="InterPro" id="IPR038631">
    <property type="entry name" value="Glycoprot_B_PH2_sf"/>
</dbReference>
<dbReference type="InterPro" id="IPR055341">
    <property type="entry name" value="Glycoprotein_B_ecto_C"/>
</dbReference>
<dbReference type="InterPro" id="IPR000234">
    <property type="entry name" value="Herpes_Glycoprot_B"/>
</dbReference>
<dbReference type="Pfam" id="PF17416">
    <property type="entry name" value="Glycoprot_B_PH1"/>
    <property type="match status" value="1"/>
</dbReference>
<dbReference type="Pfam" id="PF17417">
    <property type="entry name" value="Glycoprot_B_PH2"/>
    <property type="match status" value="1"/>
</dbReference>
<dbReference type="Pfam" id="PF00606">
    <property type="entry name" value="Glycoprotein_B"/>
    <property type="match status" value="1"/>
</dbReference>
<dbReference type="SUPFAM" id="SSF161008">
    <property type="entry name" value="Viral glycoprotein ectodomain-like"/>
    <property type="match status" value="1"/>
</dbReference>
<proteinExistence type="inferred from homology"/>
<organism>
    <name type="scientific">Saimiriine herpesvirus 2 (strain 11)</name>
    <name type="common">SaHV-2</name>
    <name type="synonym">Herpesvirus saimiri</name>
    <dbReference type="NCBI Taxonomy" id="10383"/>
    <lineage>
        <taxon>Viruses</taxon>
        <taxon>Duplodnaviria</taxon>
        <taxon>Heunggongvirae</taxon>
        <taxon>Peploviricota</taxon>
        <taxon>Herviviricetes</taxon>
        <taxon>Herpesvirales</taxon>
        <taxon>Orthoherpesviridae</taxon>
        <taxon>Gammaherpesvirinae</taxon>
        <taxon>Rhadinovirus</taxon>
        <taxon>Rhadinovirus saimiriinegamma2</taxon>
        <taxon>Saimiriine herpesvirus 2</taxon>
    </lineage>
</organism>
<organismHost>
    <name type="scientific">Saimiri sciureus</name>
    <name type="common">Common squirrel monkey</name>
    <dbReference type="NCBI Taxonomy" id="9521"/>
</organismHost>
<protein>
    <recommendedName>
        <fullName evidence="2">Envelope glycoprotein B</fullName>
        <shortName evidence="2">gB</shortName>
    </recommendedName>
</protein>
<feature type="signal peptide" evidence="2">
    <location>
        <begin position="1"/>
        <end position="19"/>
    </location>
</feature>
<feature type="chain" id="PRO_0000038182" description="Envelope glycoprotein B" evidence="2">
    <location>
        <begin position="20"/>
        <end position="808"/>
    </location>
</feature>
<feature type="topological domain" description="Virion surface" evidence="2">
    <location>
        <begin position="20"/>
        <end position="701"/>
    </location>
</feature>
<feature type="transmembrane region" description="Helical" evidence="2">
    <location>
        <begin position="702"/>
        <end position="722"/>
    </location>
</feature>
<feature type="topological domain" description="Intravirion" evidence="2">
    <location>
        <begin position="723"/>
        <end position="808"/>
    </location>
</feature>
<feature type="region of interest" description="Involved in fusion and/or binding to host membrane" evidence="2">
    <location>
        <begin position="101"/>
        <end position="107"/>
    </location>
</feature>
<feature type="region of interest" description="Involved in fusion and/or binding to host membrane" evidence="2">
    <location>
        <begin position="187"/>
        <end position="195"/>
    </location>
</feature>
<feature type="region of interest" description="Hydrophobic membrane proximal region" evidence="2">
    <location>
        <begin position="647"/>
        <end position="699"/>
    </location>
</feature>
<feature type="region of interest" description="Hydrophobic membrane proximal region">
    <location>
        <begin position="658"/>
        <end position="698"/>
    </location>
</feature>
<feature type="site" description="Cleavage; by host furin" evidence="1">
    <location>
        <begin position="410"/>
        <end position="411"/>
    </location>
</feature>
<feature type="glycosylation site" description="N-linked (GlcNAc...) asparagine; by host" evidence="2">
    <location>
        <position position="30"/>
    </location>
</feature>
<feature type="glycosylation site" description="N-linked (GlcNAc...) asparagine; by host" evidence="2">
    <location>
        <position position="158"/>
    </location>
</feature>
<feature type="glycosylation site" description="N-linked (GlcNAc...) asparagine; by host" evidence="2">
    <location>
        <position position="239"/>
    </location>
</feature>
<feature type="glycosylation site" description="N-linked (GlcNAc...) asparagine; by host" evidence="2">
    <location>
        <position position="251"/>
    </location>
</feature>
<feature type="glycosylation site" description="N-linked (GlcNAc...) asparagine; by host" evidence="2">
    <location>
        <position position="285"/>
    </location>
</feature>
<feature type="glycosylation site" description="N-linked (GlcNAc...) asparagine; by host" evidence="2">
    <location>
        <position position="331"/>
    </location>
</feature>
<feature type="glycosylation site" description="N-linked (GlcNAc...) asparagine; by host" evidence="2">
    <location>
        <position position="344"/>
    </location>
</feature>
<feature type="glycosylation site" description="N-linked (GlcNAc...) asparagine; by host" evidence="2">
    <location>
        <position position="355"/>
    </location>
</feature>
<feature type="glycosylation site" description="N-linked (GlcNAc...) asparagine; by host" evidence="2">
    <location>
        <position position="361"/>
    </location>
</feature>
<feature type="glycosylation site" description="N-linked (GlcNAc...) asparagine; by host" evidence="2">
    <location>
        <position position="532"/>
    </location>
</feature>
<feature type="glycosylation site" description="N-linked (GlcNAc...) asparagine; by host" evidence="2">
    <location>
        <position position="569"/>
    </location>
</feature>
<feature type="glycosylation site" description="N-linked (GlcNAc...) asparagine; by host" evidence="2">
    <location>
        <position position="587"/>
    </location>
</feature>
<feature type="glycosylation site" description="N-linked (GlcNAc...) asparagine; by host" evidence="2">
    <location>
        <position position="598"/>
    </location>
</feature>
<feature type="disulfide bond" evidence="2">
    <location>
        <begin position="45"/>
        <end position="498"/>
    </location>
</feature>
<feature type="disulfide bond" evidence="2">
    <location>
        <begin position="62"/>
        <end position="454"/>
    </location>
</feature>
<feature type="disulfide bond" evidence="2">
    <location>
        <begin position="136"/>
        <end position="201"/>
    </location>
</feature>
<feature type="disulfide bond" evidence="2">
    <location>
        <begin position="291"/>
        <end position="338"/>
    </location>
</feature>
<feature type="disulfide bond" evidence="2">
    <location>
        <begin position="520"/>
        <end position="557"/>
    </location>
</feature>
<gene>
    <name evidence="2" type="primary">gB</name>
    <name type="synonym">KCRF1</name>
    <name type="ORF">8</name>
</gene>
<keyword id="KW-1015">Disulfide bond</keyword>
<keyword id="KW-0325">Glycoprotein</keyword>
<keyword id="KW-1032">Host cell membrane</keyword>
<keyword id="KW-1039">Host endosome</keyword>
<keyword id="KW-1040">Host Golgi apparatus</keyword>
<keyword id="KW-1043">Host membrane</keyword>
<keyword id="KW-0945">Host-virus interaction</keyword>
<keyword id="KW-0472">Membrane</keyword>
<keyword id="KW-1185">Reference proteome</keyword>
<keyword id="KW-0732">Signal</keyword>
<keyword id="KW-0812">Transmembrane</keyword>
<keyword id="KW-1133">Transmembrane helix</keyword>
<keyword id="KW-1161">Viral attachment to host cell</keyword>
<keyword id="KW-0261">Viral envelope protein</keyword>
<keyword id="KW-0946">Virion</keyword>
<keyword id="KW-1160">Virus entry into host cell</keyword>
<evidence type="ECO:0000255" key="1"/>
<evidence type="ECO:0000255" key="2">
    <source>
        <dbReference type="HAMAP-Rule" id="MF_04032"/>
    </source>
</evidence>
<evidence type="ECO:0000305" key="3"/>
<accession>P24905</accession>
<reference key="1">
    <citation type="journal article" date="1990" name="Virology">
        <title>Structural organization of the conserved gene block of Herpesvirus saimiri coding for DNA polymerase, glycoprotein B, and major DNA binding protein.</title>
        <authorList>
            <person name="Albrecht J.-C."/>
            <person name="Fleckenstein B."/>
        </authorList>
    </citation>
    <scope>NUCLEOTIDE SEQUENCE [GENOMIC DNA]</scope>
</reference>
<reference key="2">
    <citation type="journal article" date="1992" name="J. Virol.">
        <title>Primary structure of the herpesvirus saimiri genome.</title>
        <authorList>
            <person name="Albrecht J.-C."/>
            <person name="Nicholas J."/>
            <person name="Biller D."/>
            <person name="Cameron K.R."/>
            <person name="Biesinger B."/>
            <person name="Newman C."/>
            <person name="Wittmann S."/>
            <person name="Craxton M.A."/>
            <person name="Coleman H."/>
            <person name="Fleckenstein B."/>
            <person name="Honess R.W."/>
        </authorList>
    </citation>
    <scope>NUCLEOTIDE SEQUENCE [LARGE SCALE GENOMIC DNA]</scope>
</reference>